<proteinExistence type="inferred from homology"/>
<reference key="1">
    <citation type="journal article" date="2011" name="J. Bacteriol.">
        <title>Complete genome sequence of the plant growth-promoting endophyte Burkholderia phytofirmans strain PsJN.</title>
        <authorList>
            <person name="Weilharter A."/>
            <person name="Mitter B."/>
            <person name="Shin M.V."/>
            <person name="Chain P.S."/>
            <person name="Nowak J."/>
            <person name="Sessitsch A."/>
        </authorList>
    </citation>
    <scope>NUCLEOTIDE SEQUENCE [LARGE SCALE GENOMIC DNA]</scope>
    <source>
        <strain>DSM 17436 / LMG 22146 / PsJN</strain>
    </source>
</reference>
<protein>
    <recommendedName>
        <fullName evidence="1">Aspartyl/glutamyl-tRNA(Asn/Gln) amidotransferase subunit B</fullName>
        <shortName evidence="1">Asp/Glu-ADT subunit B</shortName>
        <ecNumber evidence="1">6.3.5.-</ecNumber>
    </recommendedName>
</protein>
<sequence length="491" mass="53734">MAKQWEVVIGLETHAQLSTQSKIFSGTATQFGAAPNTQASPVDLALPGTLPVMNRGAVERAIQFGLAIGATVAPRSIFARKNYFYPDLPKGYQISQYEIPVVQGGQVTIQVPANEKAGKEAYEKVVNLTRAHLEEDAGKSLHEDFAGMTGIDLNRAGTPLLEIVTEPEMRSAAEAVAYAKTLHTLVTWLGICDGNMQEGSFRCDANVSVRPVGQAEFGTRAEIKNLNSFRFLEEAIQYEVRRQIELIEDGGTVVQETRLYDPDKRETRSMRSKEDAHDYRYFPDPDLMPLVIDAAWIERVKAEMTELPVAIQQRFVSQYGLTPYDANVLTSSKAMAAYYEAVVSKVGPANAKVAANWLMGEVSSQLNREGLDIAENPVSSAQLALLLQRIADGTISNKIAKEIFLAIWEEKATDESAADRIIEAKGLKQISDTGALEAIIDEVLAANPKSVEEFRAGKEKAFNALIGQAMKATKGKANPAQVNELLKKKLS</sequence>
<evidence type="ECO:0000255" key="1">
    <source>
        <dbReference type="HAMAP-Rule" id="MF_00121"/>
    </source>
</evidence>
<keyword id="KW-0067">ATP-binding</keyword>
<keyword id="KW-0436">Ligase</keyword>
<keyword id="KW-0547">Nucleotide-binding</keyword>
<keyword id="KW-0648">Protein biosynthesis</keyword>
<dbReference type="EC" id="6.3.5.-" evidence="1"/>
<dbReference type="EMBL" id="CP001052">
    <property type="protein sequence ID" value="ACD14754.1"/>
    <property type="molecule type" value="Genomic_DNA"/>
</dbReference>
<dbReference type="RefSeq" id="WP_012431398.1">
    <property type="nucleotide sequence ID" value="NC_010681.1"/>
</dbReference>
<dbReference type="SMR" id="B2T1M5"/>
<dbReference type="STRING" id="398527.Bphyt_0329"/>
<dbReference type="KEGG" id="bpy:Bphyt_0329"/>
<dbReference type="eggNOG" id="COG0064">
    <property type="taxonomic scope" value="Bacteria"/>
</dbReference>
<dbReference type="HOGENOM" id="CLU_019240_0_0_4"/>
<dbReference type="OrthoDB" id="9804078at2"/>
<dbReference type="Proteomes" id="UP000001739">
    <property type="component" value="Chromosome 1"/>
</dbReference>
<dbReference type="GO" id="GO:0050566">
    <property type="term" value="F:asparaginyl-tRNA synthase (glutamine-hydrolyzing) activity"/>
    <property type="evidence" value="ECO:0007669"/>
    <property type="project" value="RHEA"/>
</dbReference>
<dbReference type="GO" id="GO:0005524">
    <property type="term" value="F:ATP binding"/>
    <property type="evidence" value="ECO:0007669"/>
    <property type="project" value="UniProtKB-KW"/>
</dbReference>
<dbReference type="GO" id="GO:0050567">
    <property type="term" value="F:glutaminyl-tRNA synthase (glutamine-hydrolyzing) activity"/>
    <property type="evidence" value="ECO:0007669"/>
    <property type="project" value="UniProtKB-UniRule"/>
</dbReference>
<dbReference type="GO" id="GO:0070681">
    <property type="term" value="P:glutaminyl-tRNAGln biosynthesis via transamidation"/>
    <property type="evidence" value="ECO:0007669"/>
    <property type="project" value="TreeGrafter"/>
</dbReference>
<dbReference type="GO" id="GO:0006412">
    <property type="term" value="P:translation"/>
    <property type="evidence" value="ECO:0007669"/>
    <property type="project" value="UniProtKB-UniRule"/>
</dbReference>
<dbReference type="FunFam" id="1.10.10.410:FF:000001">
    <property type="entry name" value="Aspartyl/glutamyl-tRNA(Asn/Gln) amidotransferase subunit B"/>
    <property type="match status" value="1"/>
</dbReference>
<dbReference type="FunFam" id="1.10.150.380:FF:000001">
    <property type="entry name" value="Aspartyl/glutamyl-tRNA(Asn/Gln) amidotransferase subunit B"/>
    <property type="match status" value="1"/>
</dbReference>
<dbReference type="Gene3D" id="1.10.10.410">
    <property type="match status" value="1"/>
</dbReference>
<dbReference type="Gene3D" id="1.10.150.380">
    <property type="entry name" value="GatB domain, N-terminal subdomain"/>
    <property type="match status" value="1"/>
</dbReference>
<dbReference type="HAMAP" id="MF_00121">
    <property type="entry name" value="GatB"/>
    <property type="match status" value="1"/>
</dbReference>
<dbReference type="InterPro" id="IPR017959">
    <property type="entry name" value="Asn/Gln-tRNA_amidoTrfase_suB/E"/>
</dbReference>
<dbReference type="InterPro" id="IPR006075">
    <property type="entry name" value="Asn/Gln-tRNA_Trfase_suB/E_cat"/>
</dbReference>
<dbReference type="InterPro" id="IPR018027">
    <property type="entry name" value="Asn/Gln_amidotransferase"/>
</dbReference>
<dbReference type="InterPro" id="IPR003789">
    <property type="entry name" value="Asn/Gln_tRNA_amidoTrase-B-like"/>
</dbReference>
<dbReference type="InterPro" id="IPR004413">
    <property type="entry name" value="GatB"/>
</dbReference>
<dbReference type="InterPro" id="IPR042114">
    <property type="entry name" value="GatB_C_1"/>
</dbReference>
<dbReference type="InterPro" id="IPR023168">
    <property type="entry name" value="GatB_Yqey_C_2"/>
</dbReference>
<dbReference type="InterPro" id="IPR017958">
    <property type="entry name" value="Gln-tRNA_amidoTrfase_suB_CS"/>
</dbReference>
<dbReference type="InterPro" id="IPR014746">
    <property type="entry name" value="Gln_synth/guanido_kin_cat_dom"/>
</dbReference>
<dbReference type="NCBIfam" id="TIGR00133">
    <property type="entry name" value="gatB"/>
    <property type="match status" value="1"/>
</dbReference>
<dbReference type="NCBIfam" id="NF004012">
    <property type="entry name" value="PRK05477.1-2"/>
    <property type="match status" value="1"/>
</dbReference>
<dbReference type="NCBIfam" id="NF004014">
    <property type="entry name" value="PRK05477.1-4"/>
    <property type="match status" value="1"/>
</dbReference>
<dbReference type="NCBIfam" id="NF004015">
    <property type="entry name" value="PRK05477.1-5"/>
    <property type="match status" value="1"/>
</dbReference>
<dbReference type="PANTHER" id="PTHR11659">
    <property type="entry name" value="GLUTAMYL-TRNA GLN AMIDOTRANSFERASE SUBUNIT B MITOCHONDRIAL AND PROKARYOTIC PET112-RELATED"/>
    <property type="match status" value="1"/>
</dbReference>
<dbReference type="PANTHER" id="PTHR11659:SF0">
    <property type="entry name" value="GLUTAMYL-TRNA(GLN) AMIDOTRANSFERASE SUBUNIT B, MITOCHONDRIAL"/>
    <property type="match status" value="1"/>
</dbReference>
<dbReference type="Pfam" id="PF02934">
    <property type="entry name" value="GatB_N"/>
    <property type="match status" value="1"/>
</dbReference>
<dbReference type="Pfam" id="PF02637">
    <property type="entry name" value="GatB_Yqey"/>
    <property type="match status" value="1"/>
</dbReference>
<dbReference type="SMART" id="SM00845">
    <property type="entry name" value="GatB_Yqey"/>
    <property type="match status" value="1"/>
</dbReference>
<dbReference type="SUPFAM" id="SSF89095">
    <property type="entry name" value="GatB/YqeY motif"/>
    <property type="match status" value="1"/>
</dbReference>
<dbReference type="SUPFAM" id="SSF55931">
    <property type="entry name" value="Glutamine synthetase/guanido kinase"/>
    <property type="match status" value="1"/>
</dbReference>
<dbReference type="PROSITE" id="PS01234">
    <property type="entry name" value="GATB"/>
    <property type="match status" value="1"/>
</dbReference>
<organism>
    <name type="scientific">Paraburkholderia phytofirmans (strain DSM 17436 / LMG 22146 / PsJN)</name>
    <name type="common">Burkholderia phytofirmans</name>
    <dbReference type="NCBI Taxonomy" id="398527"/>
    <lineage>
        <taxon>Bacteria</taxon>
        <taxon>Pseudomonadati</taxon>
        <taxon>Pseudomonadota</taxon>
        <taxon>Betaproteobacteria</taxon>
        <taxon>Burkholderiales</taxon>
        <taxon>Burkholderiaceae</taxon>
        <taxon>Paraburkholderia</taxon>
    </lineage>
</organism>
<name>GATB_PARPJ</name>
<gene>
    <name evidence="1" type="primary">gatB</name>
    <name type="ordered locus">Bphyt_0329</name>
</gene>
<accession>B2T1M5</accession>
<feature type="chain" id="PRO_1000095194" description="Aspartyl/glutamyl-tRNA(Asn/Gln) amidotransferase subunit B">
    <location>
        <begin position="1"/>
        <end position="491"/>
    </location>
</feature>
<comment type="function">
    <text evidence="1">Allows the formation of correctly charged Asn-tRNA(Asn) or Gln-tRNA(Gln) through the transamidation of misacylated Asp-tRNA(Asn) or Glu-tRNA(Gln) in organisms which lack either or both of asparaginyl-tRNA or glutaminyl-tRNA synthetases. The reaction takes place in the presence of glutamine and ATP through an activated phospho-Asp-tRNA(Asn) or phospho-Glu-tRNA(Gln).</text>
</comment>
<comment type="catalytic activity">
    <reaction evidence="1">
        <text>L-glutamyl-tRNA(Gln) + L-glutamine + ATP + H2O = L-glutaminyl-tRNA(Gln) + L-glutamate + ADP + phosphate + H(+)</text>
        <dbReference type="Rhea" id="RHEA:17521"/>
        <dbReference type="Rhea" id="RHEA-COMP:9681"/>
        <dbReference type="Rhea" id="RHEA-COMP:9684"/>
        <dbReference type="ChEBI" id="CHEBI:15377"/>
        <dbReference type="ChEBI" id="CHEBI:15378"/>
        <dbReference type="ChEBI" id="CHEBI:29985"/>
        <dbReference type="ChEBI" id="CHEBI:30616"/>
        <dbReference type="ChEBI" id="CHEBI:43474"/>
        <dbReference type="ChEBI" id="CHEBI:58359"/>
        <dbReference type="ChEBI" id="CHEBI:78520"/>
        <dbReference type="ChEBI" id="CHEBI:78521"/>
        <dbReference type="ChEBI" id="CHEBI:456216"/>
    </reaction>
</comment>
<comment type="catalytic activity">
    <reaction evidence="1">
        <text>L-aspartyl-tRNA(Asn) + L-glutamine + ATP + H2O = L-asparaginyl-tRNA(Asn) + L-glutamate + ADP + phosphate + 2 H(+)</text>
        <dbReference type="Rhea" id="RHEA:14513"/>
        <dbReference type="Rhea" id="RHEA-COMP:9674"/>
        <dbReference type="Rhea" id="RHEA-COMP:9677"/>
        <dbReference type="ChEBI" id="CHEBI:15377"/>
        <dbReference type="ChEBI" id="CHEBI:15378"/>
        <dbReference type="ChEBI" id="CHEBI:29985"/>
        <dbReference type="ChEBI" id="CHEBI:30616"/>
        <dbReference type="ChEBI" id="CHEBI:43474"/>
        <dbReference type="ChEBI" id="CHEBI:58359"/>
        <dbReference type="ChEBI" id="CHEBI:78515"/>
        <dbReference type="ChEBI" id="CHEBI:78516"/>
        <dbReference type="ChEBI" id="CHEBI:456216"/>
    </reaction>
</comment>
<comment type="subunit">
    <text evidence="1">Heterotrimer of A, B and C subunits.</text>
</comment>
<comment type="similarity">
    <text evidence="1">Belongs to the GatB/GatE family. GatB subfamily.</text>
</comment>